<reference key="1">
    <citation type="journal article" date="2004" name="Proc. Natl. Acad. Sci. U.S.A.">
        <title>Insights into the evolution of Yersinia pestis through whole-genome comparison with Yersinia pseudotuberculosis.</title>
        <authorList>
            <person name="Chain P.S.G."/>
            <person name="Carniel E."/>
            <person name="Larimer F.W."/>
            <person name="Lamerdin J."/>
            <person name="Stoutland P.O."/>
            <person name="Regala W.M."/>
            <person name="Georgescu A.M."/>
            <person name="Vergez L.M."/>
            <person name="Land M.L."/>
            <person name="Motin V.L."/>
            <person name="Brubaker R.R."/>
            <person name="Fowler J."/>
            <person name="Hinnebusch J."/>
            <person name="Marceau M."/>
            <person name="Medigue C."/>
            <person name="Simonet M."/>
            <person name="Chenal-Francisque V."/>
            <person name="Souza B."/>
            <person name="Dacheux D."/>
            <person name="Elliott J.M."/>
            <person name="Derbise A."/>
            <person name="Hauser L.J."/>
            <person name="Garcia E."/>
        </authorList>
    </citation>
    <scope>NUCLEOTIDE SEQUENCE [LARGE SCALE GENOMIC DNA]</scope>
    <source>
        <strain>IP32953</strain>
    </source>
</reference>
<sequence length="336" mass="37530">MLSYAPENAYQRASTMENKKVFPKEKSGLHPRNRHRSRYDFDALSVSCPELIPFLAPTAYGDISVDFADPLAVKMLNKALLKHFYGIEYWDIPADSLCPPIPGRADYVHHLADLLASCNGEVIPKGKNIALLDIGVGANCIYPIIGQREYGWRFTGTDIDSHALSAAKMVVSMNPTLKNTLRLKQQKDPHAIFEGVWAVNERYDATLCNPPFHGSAEEAAATTRRKLHKLGKNEVAAKPVQNFGGKNSELWCEGGEEGFVSRMVAESVAKAQNCFWFTSLISKKTTLPAIYHALRYVKAVEVRTIEMAQGQKVSRFVAWTFLTPEQQAAWVAERWA</sequence>
<proteinExistence type="inferred from homology"/>
<dbReference type="EC" id="2.1.1.181" evidence="1"/>
<dbReference type="EMBL" id="BX936398">
    <property type="protein sequence ID" value="CAH21791.1"/>
    <property type="molecule type" value="Genomic_DNA"/>
</dbReference>
<dbReference type="SMR" id="Q669D4"/>
<dbReference type="KEGG" id="yps:YPTB2553"/>
<dbReference type="Proteomes" id="UP000001011">
    <property type="component" value="Chromosome"/>
</dbReference>
<dbReference type="GO" id="GO:0005737">
    <property type="term" value="C:cytoplasm"/>
    <property type="evidence" value="ECO:0007669"/>
    <property type="project" value="UniProtKB-SubCell"/>
</dbReference>
<dbReference type="GO" id="GO:0052907">
    <property type="term" value="F:23S rRNA (adenine(1618)-N(6))-methyltransferase activity"/>
    <property type="evidence" value="ECO:0007669"/>
    <property type="project" value="UniProtKB-EC"/>
</dbReference>
<dbReference type="GO" id="GO:0070475">
    <property type="term" value="P:rRNA base methylation"/>
    <property type="evidence" value="ECO:0007669"/>
    <property type="project" value="TreeGrafter"/>
</dbReference>
<dbReference type="CDD" id="cd02440">
    <property type="entry name" value="AdoMet_MTases"/>
    <property type="match status" value="1"/>
</dbReference>
<dbReference type="FunFam" id="3.40.50.150:FF:000045">
    <property type="entry name" value="Ribosomal RNA large subunit methyltransferase F"/>
    <property type="match status" value="1"/>
</dbReference>
<dbReference type="Gene3D" id="3.40.50.150">
    <property type="entry name" value="Vaccinia Virus protein VP39"/>
    <property type="match status" value="1"/>
</dbReference>
<dbReference type="HAMAP" id="MF_01848">
    <property type="entry name" value="23SrRNA_methyltr_F"/>
    <property type="match status" value="1"/>
</dbReference>
<dbReference type="InterPro" id="IPR010286">
    <property type="entry name" value="METTL16/RlmF"/>
</dbReference>
<dbReference type="InterPro" id="IPR016909">
    <property type="entry name" value="rRNA_lsu_MeTfrase_F"/>
</dbReference>
<dbReference type="InterPro" id="IPR029063">
    <property type="entry name" value="SAM-dependent_MTases_sf"/>
</dbReference>
<dbReference type="NCBIfam" id="NF008725">
    <property type="entry name" value="PRK11727.1"/>
    <property type="match status" value="1"/>
</dbReference>
<dbReference type="PANTHER" id="PTHR13393:SF0">
    <property type="entry name" value="RNA N6-ADENOSINE-METHYLTRANSFERASE METTL16"/>
    <property type="match status" value="1"/>
</dbReference>
<dbReference type="PANTHER" id="PTHR13393">
    <property type="entry name" value="SAM-DEPENDENT METHYLTRANSFERASE"/>
    <property type="match status" value="1"/>
</dbReference>
<dbReference type="Pfam" id="PF05971">
    <property type="entry name" value="Methyltransf_10"/>
    <property type="match status" value="1"/>
</dbReference>
<dbReference type="PIRSF" id="PIRSF029038">
    <property type="entry name" value="Mtase_YbiN_prd"/>
    <property type="match status" value="1"/>
</dbReference>
<dbReference type="SUPFAM" id="SSF53335">
    <property type="entry name" value="S-adenosyl-L-methionine-dependent methyltransferases"/>
    <property type="match status" value="1"/>
</dbReference>
<name>RLMF_YERPS</name>
<evidence type="ECO:0000255" key="1">
    <source>
        <dbReference type="HAMAP-Rule" id="MF_01848"/>
    </source>
</evidence>
<keyword id="KW-0963">Cytoplasm</keyword>
<keyword id="KW-0489">Methyltransferase</keyword>
<keyword id="KW-0698">rRNA processing</keyword>
<keyword id="KW-0949">S-adenosyl-L-methionine</keyword>
<keyword id="KW-0808">Transferase</keyword>
<organism>
    <name type="scientific">Yersinia pseudotuberculosis serotype I (strain IP32953)</name>
    <dbReference type="NCBI Taxonomy" id="273123"/>
    <lineage>
        <taxon>Bacteria</taxon>
        <taxon>Pseudomonadati</taxon>
        <taxon>Pseudomonadota</taxon>
        <taxon>Gammaproteobacteria</taxon>
        <taxon>Enterobacterales</taxon>
        <taxon>Yersiniaceae</taxon>
        <taxon>Yersinia</taxon>
    </lineage>
</organism>
<accession>Q669D4</accession>
<gene>
    <name evidence="1" type="primary">rlmF</name>
    <name type="ordered locus">YPTB2553</name>
</gene>
<protein>
    <recommendedName>
        <fullName evidence="1">Ribosomal RNA large subunit methyltransferase F</fullName>
        <ecNumber evidence="1">2.1.1.181</ecNumber>
    </recommendedName>
    <alternativeName>
        <fullName evidence="1">23S rRNA mA1618 methyltransferase</fullName>
    </alternativeName>
    <alternativeName>
        <fullName evidence="1">rRNA adenine N-6-methyltransferase</fullName>
    </alternativeName>
</protein>
<comment type="function">
    <text evidence="1">Specifically methylates the adenine in position 1618 of 23S rRNA.</text>
</comment>
<comment type="catalytic activity">
    <reaction evidence="1">
        <text>adenosine(1618) in 23S rRNA + S-adenosyl-L-methionine = N(6)-methyladenosine(1618) in 23S rRNA + S-adenosyl-L-homocysteine + H(+)</text>
        <dbReference type="Rhea" id="RHEA:16497"/>
        <dbReference type="Rhea" id="RHEA-COMP:10229"/>
        <dbReference type="Rhea" id="RHEA-COMP:10231"/>
        <dbReference type="ChEBI" id="CHEBI:15378"/>
        <dbReference type="ChEBI" id="CHEBI:57856"/>
        <dbReference type="ChEBI" id="CHEBI:59789"/>
        <dbReference type="ChEBI" id="CHEBI:74411"/>
        <dbReference type="ChEBI" id="CHEBI:74449"/>
        <dbReference type="EC" id="2.1.1.181"/>
    </reaction>
</comment>
<comment type="subcellular location">
    <subcellularLocation>
        <location evidence="1">Cytoplasm</location>
    </subcellularLocation>
</comment>
<comment type="similarity">
    <text evidence="1">Belongs to the methyltransferase superfamily. METTL16/RlmF family.</text>
</comment>
<feature type="chain" id="PRO_0000349986" description="Ribosomal RNA large subunit methyltransferase F">
    <location>
        <begin position="1"/>
        <end position="336"/>
    </location>
</feature>